<proteinExistence type="inferred from homology"/>
<evidence type="ECO:0000255" key="1">
    <source>
        <dbReference type="HAMAP-Rule" id="MF_00454"/>
    </source>
</evidence>
<protein>
    <recommendedName>
        <fullName evidence="1">Fluoride-specific ion channel FluC</fullName>
    </recommendedName>
</protein>
<keyword id="KW-0997">Cell inner membrane</keyword>
<keyword id="KW-1003">Cell membrane</keyword>
<keyword id="KW-0407">Ion channel</keyword>
<keyword id="KW-0406">Ion transport</keyword>
<keyword id="KW-0472">Membrane</keyword>
<keyword id="KW-0479">Metal-binding</keyword>
<keyword id="KW-0915">Sodium</keyword>
<keyword id="KW-0812">Transmembrane</keyword>
<keyword id="KW-1133">Transmembrane helix</keyword>
<keyword id="KW-0813">Transport</keyword>
<organism>
    <name type="scientific">Escherichia coli (strain K12 / MC4100 / BW2952)</name>
    <dbReference type="NCBI Taxonomy" id="595496"/>
    <lineage>
        <taxon>Bacteria</taxon>
        <taxon>Pseudomonadati</taxon>
        <taxon>Pseudomonadota</taxon>
        <taxon>Gammaproteobacteria</taxon>
        <taxon>Enterobacterales</taxon>
        <taxon>Enterobacteriaceae</taxon>
        <taxon>Escherichia</taxon>
    </lineage>
</organism>
<comment type="function">
    <text evidence="1">Fluoride-specific ion channel. Important for reducing fluoride concentration in the cell, thus reducing its toxicity.</text>
</comment>
<comment type="catalytic activity">
    <reaction evidence="1">
        <text>fluoride(in) = fluoride(out)</text>
        <dbReference type="Rhea" id="RHEA:76159"/>
        <dbReference type="ChEBI" id="CHEBI:17051"/>
    </reaction>
    <physiologicalReaction direction="left-to-right" evidence="1">
        <dbReference type="Rhea" id="RHEA:76160"/>
    </physiologicalReaction>
</comment>
<comment type="activity regulation">
    <text evidence="1">Na(+) is not transported, but it plays an essential structural role and its presence is essential for fluoride channel function.</text>
</comment>
<comment type="subcellular location">
    <subcellularLocation>
        <location evidence="1">Cell inner membrane</location>
        <topology evidence="1">Multi-pass membrane protein</topology>
    </subcellularLocation>
</comment>
<comment type="similarity">
    <text evidence="1">Belongs to the fluoride channel Fluc/FEX (TC 1.A.43) family.</text>
</comment>
<accession>C4ZWB3</accession>
<reference key="1">
    <citation type="journal article" date="2009" name="J. Bacteriol.">
        <title>Genomic sequencing reveals regulatory mutations and recombinational events in the widely used MC4100 lineage of Escherichia coli K-12.</title>
        <authorList>
            <person name="Ferenci T."/>
            <person name="Zhou Z."/>
            <person name="Betteridge T."/>
            <person name="Ren Y."/>
            <person name="Liu Y."/>
            <person name="Feng L."/>
            <person name="Reeves P.R."/>
            <person name="Wang L."/>
        </authorList>
    </citation>
    <scope>NUCLEOTIDE SEQUENCE [LARGE SCALE GENOMIC DNA]</scope>
    <source>
        <strain>K12 / MC4100 / BW2952</strain>
    </source>
</reference>
<dbReference type="EMBL" id="CP001396">
    <property type="protein sequence ID" value="ACR64583.1"/>
    <property type="molecule type" value="Genomic_DNA"/>
</dbReference>
<dbReference type="RefSeq" id="WP_000939747.1">
    <property type="nucleotide sequence ID" value="NC_012759.1"/>
</dbReference>
<dbReference type="SMR" id="C4ZWB3"/>
<dbReference type="KEGG" id="ebw:BWG_0497"/>
<dbReference type="HOGENOM" id="CLU_114342_3_3_6"/>
<dbReference type="GO" id="GO:0005886">
    <property type="term" value="C:plasma membrane"/>
    <property type="evidence" value="ECO:0007669"/>
    <property type="project" value="UniProtKB-SubCell"/>
</dbReference>
<dbReference type="GO" id="GO:0062054">
    <property type="term" value="F:fluoride channel activity"/>
    <property type="evidence" value="ECO:0007669"/>
    <property type="project" value="UniProtKB-UniRule"/>
</dbReference>
<dbReference type="GO" id="GO:0046872">
    <property type="term" value="F:metal ion binding"/>
    <property type="evidence" value="ECO:0007669"/>
    <property type="project" value="UniProtKB-KW"/>
</dbReference>
<dbReference type="GO" id="GO:0140114">
    <property type="term" value="P:cellular detoxification of fluoride"/>
    <property type="evidence" value="ECO:0007669"/>
    <property type="project" value="UniProtKB-UniRule"/>
</dbReference>
<dbReference type="HAMAP" id="MF_00454">
    <property type="entry name" value="FluC"/>
    <property type="match status" value="1"/>
</dbReference>
<dbReference type="InterPro" id="IPR003691">
    <property type="entry name" value="FluC"/>
</dbReference>
<dbReference type="NCBIfam" id="TIGR00494">
    <property type="entry name" value="crcB"/>
    <property type="match status" value="1"/>
</dbReference>
<dbReference type="NCBIfam" id="NF010792">
    <property type="entry name" value="PRK14196.1"/>
    <property type="match status" value="1"/>
</dbReference>
<dbReference type="PANTHER" id="PTHR28259">
    <property type="entry name" value="FLUORIDE EXPORT PROTEIN 1-RELATED"/>
    <property type="match status" value="1"/>
</dbReference>
<dbReference type="PANTHER" id="PTHR28259:SF1">
    <property type="entry name" value="FLUORIDE EXPORT PROTEIN 1-RELATED"/>
    <property type="match status" value="1"/>
</dbReference>
<dbReference type="Pfam" id="PF02537">
    <property type="entry name" value="CRCB"/>
    <property type="match status" value="1"/>
</dbReference>
<sequence>MLQLLLAVFIGGGTGSVARWLLSMRFNPLHQAIPLGTLTANLIGAFIIGIGFAWFSRMTNIDPVWKVLITTGFCGGLTTFSTFSAEVVFLLQEGRFGWALLNVFVNLLGSFAMTALAFWLFSASTAH</sequence>
<gene>
    <name evidence="1" type="primary">fluC</name>
    <name evidence="1" type="synonym">crcB</name>
    <name type="ordered locus">BWG_0497</name>
</gene>
<feature type="chain" id="PRO_1000206248" description="Fluoride-specific ion channel FluC">
    <location>
        <begin position="1"/>
        <end position="127"/>
    </location>
</feature>
<feature type="transmembrane region" description="Helical" evidence="1">
    <location>
        <begin position="4"/>
        <end position="24"/>
    </location>
</feature>
<feature type="transmembrane region" description="Helical" evidence="1">
    <location>
        <begin position="35"/>
        <end position="55"/>
    </location>
</feature>
<feature type="transmembrane region" description="Helical" evidence="1">
    <location>
        <begin position="71"/>
        <end position="91"/>
    </location>
</feature>
<feature type="transmembrane region" description="Helical" evidence="1">
    <location>
        <begin position="103"/>
        <end position="123"/>
    </location>
</feature>
<feature type="binding site" evidence="1">
    <location>
        <position position="75"/>
    </location>
    <ligand>
        <name>Na(+)</name>
        <dbReference type="ChEBI" id="CHEBI:29101"/>
        <note>structural</note>
    </ligand>
</feature>
<feature type="binding site" evidence="1">
    <location>
        <position position="78"/>
    </location>
    <ligand>
        <name>Na(+)</name>
        <dbReference type="ChEBI" id="CHEBI:29101"/>
        <note>structural</note>
    </ligand>
</feature>
<name>FLUC_ECOBW</name>